<sequence length="320" mass="35751">MGCQDEQLVQTICDLYEKISKLESLKPSEDVNILFKQLVSTCIPPNPNIDVTKMCDRVQEIRLNLIKICGLAEGHLENHFSSILTSYQDNPLHHLNIFPYYNNYLKLGKLEFDLLEQNLNGFVPKSVAFIGSGPLPLTSIVLASFHLKDTIFHNFDIDPSANSLASLLVSSDPDISQRMFFHTVDIMDVTESLKSFDVVFLAALVGMNKEEKVKVIEHLQKHMAPGAVLMLRSAHGPRAFLYPIVEPCDLQGFEVLSIYHPTDDVINSVVISKKHPVVSIGNVGGPNSCLLKPCNCSKTHAKMNKNMMIEEFGAREEQLS</sequence>
<organism>
    <name type="scientific">Arabidopsis thaliana</name>
    <name type="common">Mouse-ear cress</name>
    <dbReference type="NCBI Taxonomy" id="3702"/>
    <lineage>
        <taxon>Eukaryota</taxon>
        <taxon>Viridiplantae</taxon>
        <taxon>Streptophyta</taxon>
        <taxon>Embryophyta</taxon>
        <taxon>Tracheophyta</taxon>
        <taxon>Spermatophyta</taxon>
        <taxon>Magnoliopsida</taxon>
        <taxon>eudicotyledons</taxon>
        <taxon>Gunneridae</taxon>
        <taxon>Pentapetalae</taxon>
        <taxon>rosids</taxon>
        <taxon>malvids</taxon>
        <taxon>Brassicales</taxon>
        <taxon>Brassicaceae</taxon>
        <taxon>Camelineae</taxon>
        <taxon>Arabidopsis</taxon>
    </lineage>
</organism>
<keyword id="KW-1185">Reference proteome</keyword>
<keyword id="KW-0949">S-adenosyl-L-methionine</keyword>
<keyword id="KW-0808">Transferase</keyword>
<accession>O80483</accession>
<feature type="chain" id="PRO_0000212702" description="Nicotianamine synthase 3">
    <location>
        <begin position="1"/>
        <end position="320"/>
    </location>
</feature>
<dbReference type="EC" id="2.5.1.43"/>
<dbReference type="EMBL" id="AB021936">
    <property type="protein sequence ID" value="BAA74591.1"/>
    <property type="molecule type" value="Genomic_DNA"/>
</dbReference>
<dbReference type="EMBL" id="AC003114">
    <property type="protein sequence ID" value="AAC24082.1"/>
    <property type="molecule type" value="Genomic_DNA"/>
</dbReference>
<dbReference type="EMBL" id="CP002684">
    <property type="protein sequence ID" value="AEE28417.1"/>
    <property type="molecule type" value="Genomic_DNA"/>
</dbReference>
<dbReference type="EMBL" id="AY140031">
    <property type="protein sequence ID" value="AAM98172.1"/>
    <property type="molecule type" value="mRNA"/>
</dbReference>
<dbReference type="EMBL" id="BT008817">
    <property type="protein sequence ID" value="AAP68256.1"/>
    <property type="molecule type" value="mRNA"/>
</dbReference>
<dbReference type="EMBL" id="AY087620">
    <property type="protein sequence ID" value="AAM65161.1"/>
    <property type="molecule type" value="mRNA"/>
</dbReference>
<dbReference type="PIR" id="C86225">
    <property type="entry name" value="C86225"/>
</dbReference>
<dbReference type="RefSeq" id="NP_172395.1">
    <property type="nucleotide sequence ID" value="NM_100794.4"/>
</dbReference>
<dbReference type="SMR" id="O80483"/>
<dbReference type="FunCoup" id="O80483">
    <property type="interactions" value="122"/>
</dbReference>
<dbReference type="STRING" id="3702.O80483"/>
<dbReference type="PaxDb" id="3702-AT1G09240.1"/>
<dbReference type="ProteomicsDB" id="251095"/>
<dbReference type="EnsemblPlants" id="AT1G09240.1">
    <property type="protein sequence ID" value="AT1G09240.1"/>
    <property type="gene ID" value="AT1G09240"/>
</dbReference>
<dbReference type="GeneID" id="837444"/>
<dbReference type="Gramene" id="AT1G09240.1">
    <property type="protein sequence ID" value="AT1G09240.1"/>
    <property type="gene ID" value="AT1G09240"/>
</dbReference>
<dbReference type="KEGG" id="ath:AT1G09240"/>
<dbReference type="Araport" id="AT1G09240"/>
<dbReference type="TAIR" id="AT1G09240">
    <property type="gene designation" value="NAS3"/>
</dbReference>
<dbReference type="eggNOG" id="ENOG502QTU6">
    <property type="taxonomic scope" value="Eukaryota"/>
</dbReference>
<dbReference type="HOGENOM" id="CLU_031919_1_1_1"/>
<dbReference type="InParanoid" id="O80483"/>
<dbReference type="OMA" id="DTIFHNF"/>
<dbReference type="OrthoDB" id="1858069at2759"/>
<dbReference type="PhylomeDB" id="O80483"/>
<dbReference type="BioCyc" id="ARA:AT1G09240-MONOMER"/>
<dbReference type="BRENDA" id="2.5.1.43">
    <property type="organism ID" value="399"/>
</dbReference>
<dbReference type="PRO" id="PR:O80483"/>
<dbReference type="Proteomes" id="UP000006548">
    <property type="component" value="Chromosome 1"/>
</dbReference>
<dbReference type="ExpressionAtlas" id="O80483">
    <property type="expression patterns" value="baseline and differential"/>
</dbReference>
<dbReference type="GO" id="GO:0030410">
    <property type="term" value="F:nicotianamine synthase activity"/>
    <property type="evidence" value="ECO:0007669"/>
    <property type="project" value="UniProtKB-EC"/>
</dbReference>
<dbReference type="GO" id="GO:0030418">
    <property type="term" value="P:nicotianamine biosynthetic process"/>
    <property type="evidence" value="ECO:0007669"/>
    <property type="project" value="InterPro"/>
</dbReference>
<dbReference type="GO" id="GO:0010233">
    <property type="term" value="P:phloem transport"/>
    <property type="evidence" value="ECO:0000316"/>
    <property type="project" value="TAIR"/>
</dbReference>
<dbReference type="GO" id="GO:0009555">
    <property type="term" value="P:pollen development"/>
    <property type="evidence" value="ECO:0000316"/>
    <property type="project" value="TAIR"/>
</dbReference>
<dbReference type="GO" id="GO:0009860">
    <property type="term" value="P:pollen tube growth"/>
    <property type="evidence" value="ECO:0000316"/>
    <property type="project" value="TAIR"/>
</dbReference>
<dbReference type="FunFam" id="3.40.50.150:FF:000182">
    <property type="entry name" value="Nicotianamine synthase"/>
    <property type="match status" value="1"/>
</dbReference>
<dbReference type="Gene3D" id="3.40.50.150">
    <property type="entry name" value="Vaccinia Virus protein VP39"/>
    <property type="match status" value="1"/>
</dbReference>
<dbReference type="InterPro" id="IPR004298">
    <property type="entry name" value="Nicotian_synth"/>
</dbReference>
<dbReference type="InterPro" id="IPR029063">
    <property type="entry name" value="SAM-dependent_MTases_sf"/>
</dbReference>
<dbReference type="PANTHER" id="PTHR32266">
    <property type="entry name" value="NICOTIANAMINE SYNTHASE 3"/>
    <property type="match status" value="1"/>
</dbReference>
<dbReference type="PANTHER" id="PTHR32266:SF12">
    <property type="entry name" value="NICOTIANAMINE SYNTHASE 3"/>
    <property type="match status" value="1"/>
</dbReference>
<dbReference type="Pfam" id="PF03059">
    <property type="entry name" value="NAS"/>
    <property type="match status" value="1"/>
</dbReference>
<dbReference type="SUPFAM" id="SSF53335">
    <property type="entry name" value="S-adenosyl-L-methionine-dependent methyltransferases"/>
    <property type="match status" value="1"/>
</dbReference>
<dbReference type="PROSITE" id="PS51142">
    <property type="entry name" value="NAS"/>
    <property type="match status" value="1"/>
</dbReference>
<comment type="function">
    <text>Synthesizes nicotianamine, a polyamine which serves as a sensor for the physiological iron status within the plant, and/or might be involved in the transport of iron.</text>
</comment>
<comment type="catalytic activity">
    <reaction>
        <text>3 S-adenosyl-L-methionine = nicotianamine + 3 S-methyl-5'-thioadenosine + 3 H(+)</text>
        <dbReference type="Rhea" id="RHEA:16481"/>
        <dbReference type="ChEBI" id="CHEBI:15378"/>
        <dbReference type="ChEBI" id="CHEBI:17509"/>
        <dbReference type="ChEBI" id="CHEBI:58249"/>
        <dbReference type="ChEBI" id="CHEBI:59789"/>
        <dbReference type="EC" id="2.5.1.43"/>
    </reaction>
</comment>
<comment type="tissue specificity">
    <text>In shoots.</text>
</comment>
<comment type="induction">
    <text>Constitutively expressed.</text>
</comment>
<comment type="similarity">
    <text evidence="1">Belongs to the nicotianamine synthase (NAS)-like family.</text>
</comment>
<gene>
    <name type="primary">NAS3</name>
    <name type="ordered locus">At1g09240</name>
    <name type="ORF">T12M4.5</name>
</gene>
<reference key="1">
    <citation type="journal article" date="1999" name="Soil Sci. Plant Nutr.">
        <title>Cloning of nicotianamine synthase genes from Arabidopsis thaliana.</title>
        <authorList>
            <person name="Suzuki K."/>
            <person name="Higuchi K."/>
            <person name="Nakanishi H."/>
            <person name="Nishizawa N.-K."/>
            <person name="Mori S."/>
        </authorList>
    </citation>
    <scope>NUCLEOTIDE SEQUENCE [MRNA]</scope>
    <source>
        <strain>cv. Columbia</strain>
    </source>
</reference>
<reference key="2">
    <citation type="journal article" date="2000" name="Nature">
        <title>Sequence and analysis of chromosome 1 of the plant Arabidopsis thaliana.</title>
        <authorList>
            <person name="Theologis A."/>
            <person name="Ecker J.R."/>
            <person name="Palm C.J."/>
            <person name="Federspiel N.A."/>
            <person name="Kaul S."/>
            <person name="White O."/>
            <person name="Alonso J."/>
            <person name="Altafi H."/>
            <person name="Araujo R."/>
            <person name="Bowman C.L."/>
            <person name="Brooks S.Y."/>
            <person name="Buehler E."/>
            <person name="Chan A."/>
            <person name="Chao Q."/>
            <person name="Chen H."/>
            <person name="Cheuk R.F."/>
            <person name="Chin C.W."/>
            <person name="Chung M.K."/>
            <person name="Conn L."/>
            <person name="Conway A.B."/>
            <person name="Conway A.R."/>
            <person name="Creasy T.H."/>
            <person name="Dewar K."/>
            <person name="Dunn P."/>
            <person name="Etgu P."/>
            <person name="Feldblyum T.V."/>
            <person name="Feng J.-D."/>
            <person name="Fong B."/>
            <person name="Fujii C.Y."/>
            <person name="Gill J.E."/>
            <person name="Goldsmith A.D."/>
            <person name="Haas B."/>
            <person name="Hansen N.F."/>
            <person name="Hughes B."/>
            <person name="Huizar L."/>
            <person name="Hunter J.L."/>
            <person name="Jenkins J."/>
            <person name="Johnson-Hopson C."/>
            <person name="Khan S."/>
            <person name="Khaykin E."/>
            <person name="Kim C.J."/>
            <person name="Koo H.L."/>
            <person name="Kremenetskaia I."/>
            <person name="Kurtz D.B."/>
            <person name="Kwan A."/>
            <person name="Lam B."/>
            <person name="Langin-Hooper S."/>
            <person name="Lee A."/>
            <person name="Lee J.M."/>
            <person name="Lenz C.A."/>
            <person name="Li J.H."/>
            <person name="Li Y.-P."/>
            <person name="Lin X."/>
            <person name="Liu S.X."/>
            <person name="Liu Z.A."/>
            <person name="Luros J.S."/>
            <person name="Maiti R."/>
            <person name="Marziali A."/>
            <person name="Militscher J."/>
            <person name="Miranda M."/>
            <person name="Nguyen M."/>
            <person name="Nierman W.C."/>
            <person name="Osborne B.I."/>
            <person name="Pai G."/>
            <person name="Peterson J."/>
            <person name="Pham P.K."/>
            <person name="Rizzo M."/>
            <person name="Rooney T."/>
            <person name="Rowley D."/>
            <person name="Sakano H."/>
            <person name="Salzberg S.L."/>
            <person name="Schwartz J.R."/>
            <person name="Shinn P."/>
            <person name="Southwick A.M."/>
            <person name="Sun H."/>
            <person name="Tallon L.J."/>
            <person name="Tambunga G."/>
            <person name="Toriumi M.J."/>
            <person name="Town C.D."/>
            <person name="Utterback T."/>
            <person name="Van Aken S."/>
            <person name="Vaysberg M."/>
            <person name="Vysotskaia V.S."/>
            <person name="Walker M."/>
            <person name="Wu D."/>
            <person name="Yu G."/>
            <person name="Fraser C.M."/>
            <person name="Venter J.C."/>
            <person name="Davis R.W."/>
        </authorList>
    </citation>
    <scope>NUCLEOTIDE SEQUENCE [LARGE SCALE GENOMIC DNA]</scope>
    <source>
        <strain>cv. Columbia</strain>
    </source>
</reference>
<reference key="3">
    <citation type="journal article" date="2017" name="Plant J.">
        <title>Araport11: a complete reannotation of the Arabidopsis thaliana reference genome.</title>
        <authorList>
            <person name="Cheng C.Y."/>
            <person name="Krishnakumar V."/>
            <person name="Chan A.P."/>
            <person name="Thibaud-Nissen F."/>
            <person name="Schobel S."/>
            <person name="Town C.D."/>
        </authorList>
    </citation>
    <scope>GENOME REANNOTATION</scope>
    <source>
        <strain>cv. Columbia</strain>
    </source>
</reference>
<reference key="4">
    <citation type="journal article" date="2003" name="Science">
        <title>Empirical analysis of transcriptional activity in the Arabidopsis genome.</title>
        <authorList>
            <person name="Yamada K."/>
            <person name="Lim J."/>
            <person name="Dale J.M."/>
            <person name="Chen H."/>
            <person name="Shinn P."/>
            <person name="Palm C.J."/>
            <person name="Southwick A.M."/>
            <person name="Wu H.C."/>
            <person name="Kim C.J."/>
            <person name="Nguyen M."/>
            <person name="Pham P.K."/>
            <person name="Cheuk R.F."/>
            <person name="Karlin-Newmann G."/>
            <person name="Liu S.X."/>
            <person name="Lam B."/>
            <person name="Sakano H."/>
            <person name="Wu T."/>
            <person name="Yu G."/>
            <person name="Miranda M."/>
            <person name="Quach H.L."/>
            <person name="Tripp M."/>
            <person name="Chang C.H."/>
            <person name="Lee J.M."/>
            <person name="Toriumi M.J."/>
            <person name="Chan M.M."/>
            <person name="Tang C.C."/>
            <person name="Onodera C.S."/>
            <person name="Deng J.M."/>
            <person name="Akiyama K."/>
            <person name="Ansari Y."/>
            <person name="Arakawa T."/>
            <person name="Banh J."/>
            <person name="Banno F."/>
            <person name="Bowser L."/>
            <person name="Brooks S.Y."/>
            <person name="Carninci P."/>
            <person name="Chao Q."/>
            <person name="Choy N."/>
            <person name="Enju A."/>
            <person name="Goldsmith A.D."/>
            <person name="Gurjal M."/>
            <person name="Hansen N.F."/>
            <person name="Hayashizaki Y."/>
            <person name="Johnson-Hopson C."/>
            <person name="Hsuan V.W."/>
            <person name="Iida K."/>
            <person name="Karnes M."/>
            <person name="Khan S."/>
            <person name="Koesema E."/>
            <person name="Ishida J."/>
            <person name="Jiang P.X."/>
            <person name="Jones T."/>
            <person name="Kawai J."/>
            <person name="Kamiya A."/>
            <person name="Meyers C."/>
            <person name="Nakajima M."/>
            <person name="Narusaka M."/>
            <person name="Seki M."/>
            <person name="Sakurai T."/>
            <person name="Satou M."/>
            <person name="Tamse R."/>
            <person name="Vaysberg M."/>
            <person name="Wallender E.K."/>
            <person name="Wong C."/>
            <person name="Yamamura Y."/>
            <person name="Yuan S."/>
            <person name="Shinozaki K."/>
            <person name="Davis R.W."/>
            <person name="Theologis A."/>
            <person name="Ecker J.R."/>
        </authorList>
    </citation>
    <scope>NUCLEOTIDE SEQUENCE [LARGE SCALE MRNA]</scope>
    <source>
        <strain>cv. Columbia</strain>
    </source>
</reference>
<reference key="5">
    <citation type="submission" date="2002-03" db="EMBL/GenBank/DDBJ databases">
        <title>Full-length cDNA from Arabidopsis thaliana.</title>
        <authorList>
            <person name="Brover V.V."/>
            <person name="Troukhan M.E."/>
            <person name="Alexandrov N.A."/>
            <person name="Lu Y.-P."/>
            <person name="Flavell R.B."/>
            <person name="Feldmann K.A."/>
        </authorList>
    </citation>
    <scope>NUCLEOTIDE SEQUENCE [LARGE SCALE MRNA]</scope>
</reference>
<proteinExistence type="evidence at transcript level"/>
<name>NAS3_ARATH</name>
<protein>
    <recommendedName>
        <fullName>Nicotianamine synthase 3</fullName>
        <ecNumber>2.5.1.43</ecNumber>
    </recommendedName>
    <alternativeName>
        <fullName>S-adenosyl-L-methionine:S-adenosyl-L-methionine:S-adenosyl-methionine 3-amino-3-carboxypropyltransferase 3</fullName>
        <shortName>AtNAS3</shortName>
    </alternativeName>
</protein>
<evidence type="ECO:0000305" key="1"/>